<name>MSMJS_METJA</name>
<organism>
    <name type="scientific">Methanocaldococcus jannaschii (strain ATCC 43067 / DSM 2661 / JAL-1 / JCM 10045 / NBRC 100440)</name>
    <name type="common">Methanococcus jannaschii</name>
    <dbReference type="NCBI Taxonomy" id="243232"/>
    <lineage>
        <taxon>Archaea</taxon>
        <taxon>Methanobacteriati</taxon>
        <taxon>Methanobacteriota</taxon>
        <taxon>Methanomada group</taxon>
        <taxon>Methanococci</taxon>
        <taxon>Methanococcales</taxon>
        <taxon>Methanocaldococcaceae</taxon>
        <taxon>Methanocaldococcus</taxon>
    </lineage>
</organism>
<keyword id="KW-1003">Cell membrane</keyword>
<keyword id="KW-0407">Ion channel</keyword>
<keyword id="KW-0406">Ion transport</keyword>
<keyword id="KW-0472">Membrane</keyword>
<keyword id="KW-1185">Reference proteome</keyword>
<keyword id="KW-0812">Transmembrane</keyword>
<keyword id="KW-1133">Transmembrane helix</keyword>
<keyword id="KW-0813">Transport</keyword>
<feature type="chain" id="PRO_0000110253" description="Small-conductance mechanosensitive channel MscMJ">
    <location>
        <begin position="1"/>
        <end position="350"/>
    </location>
</feature>
<feature type="transmembrane region" description="Helical" evidence="1">
    <location>
        <begin position="10"/>
        <end position="30"/>
    </location>
</feature>
<feature type="transmembrane region" description="Helical" evidence="1">
    <location>
        <begin position="59"/>
        <end position="79"/>
    </location>
</feature>
<feature type="transmembrane region" description="Helical" evidence="1">
    <location>
        <begin position="91"/>
        <end position="111"/>
    </location>
</feature>
<feature type="transmembrane region" description="Helical" evidence="1">
    <location>
        <begin position="130"/>
        <end position="150"/>
    </location>
</feature>
<feature type="transmembrane region" description="Helical" evidence="1">
    <location>
        <begin position="154"/>
        <end position="174"/>
    </location>
</feature>
<proteinExistence type="evidence at protein level"/>
<sequence>MNMEIFGNSISNILIFVVITLLGIFIGKIVDKIVRNYLKKIIDKTKTKFDDIILESIDLPIIVLVVTLFFYFGLRFLILPDYILKLIDEAVKVVVILSATYFAVKFIDGIFEHYLIPLTEKTETELDEHIIKPLKKVVKILTILLGILTALSSVGYDITALLAGLGVGGLALALAMQDTIKNFIAGILILIDKPFSLGHWVKVKGAEGIVEEIGIRSTRIRTFDYTLITIPNSELLDSAIENLTVRDRRRVLMTIGLTYNTPVEKIKRAKEIIKEIVENHPATLPPYRVHFREYGDWSLNLRVEYFVRNMGFDYYLNAVDEINLKIKEEFEKEGIEMAFPTYTVYLEKDN</sequence>
<protein>
    <recommendedName>
        <fullName>Small-conductance mechanosensitive channel MscMJ</fullName>
    </recommendedName>
</protein>
<dbReference type="EMBL" id="L77117">
    <property type="protein sequence ID" value="AAB98155.1"/>
    <property type="molecule type" value="Genomic_DNA"/>
</dbReference>
<dbReference type="PIR" id="C64321">
    <property type="entry name" value="C64321"/>
</dbReference>
<dbReference type="SMR" id="Q57634"/>
<dbReference type="FunCoup" id="Q57634">
    <property type="interactions" value="10"/>
</dbReference>
<dbReference type="STRING" id="243232.MJ_0170"/>
<dbReference type="TCDB" id="1.A.23.4.2">
    <property type="family name" value="the small conductance mechanosensitive ion channel (mscs) family"/>
</dbReference>
<dbReference type="PaxDb" id="243232-MJ_0170"/>
<dbReference type="EnsemblBacteria" id="AAB98155">
    <property type="protein sequence ID" value="AAB98155"/>
    <property type="gene ID" value="MJ_0170"/>
</dbReference>
<dbReference type="KEGG" id="mja:MJ_0170"/>
<dbReference type="eggNOG" id="arCOG01568">
    <property type="taxonomic scope" value="Archaea"/>
</dbReference>
<dbReference type="HOGENOM" id="CLU_037945_0_1_2"/>
<dbReference type="InParanoid" id="Q57634"/>
<dbReference type="PhylomeDB" id="Q57634"/>
<dbReference type="Proteomes" id="UP000000805">
    <property type="component" value="Chromosome"/>
</dbReference>
<dbReference type="GO" id="GO:0005886">
    <property type="term" value="C:plasma membrane"/>
    <property type="evidence" value="ECO:0007669"/>
    <property type="project" value="UniProtKB-SubCell"/>
</dbReference>
<dbReference type="GO" id="GO:0034220">
    <property type="term" value="P:monoatomic ion transmembrane transport"/>
    <property type="evidence" value="ECO:0007669"/>
    <property type="project" value="UniProtKB-KW"/>
</dbReference>
<dbReference type="Gene3D" id="1.10.287.1260">
    <property type="match status" value="1"/>
</dbReference>
<dbReference type="Gene3D" id="2.30.30.60">
    <property type="match status" value="1"/>
</dbReference>
<dbReference type="Gene3D" id="3.30.70.100">
    <property type="match status" value="1"/>
</dbReference>
<dbReference type="InterPro" id="IPR010920">
    <property type="entry name" value="LSM_dom_sf"/>
</dbReference>
<dbReference type="InterPro" id="IPR049142">
    <property type="entry name" value="MS_channel_1st"/>
</dbReference>
<dbReference type="InterPro" id="IPR049278">
    <property type="entry name" value="MS_channel_C"/>
</dbReference>
<dbReference type="InterPro" id="IPR008910">
    <property type="entry name" value="MSC_TM_helix"/>
</dbReference>
<dbReference type="InterPro" id="IPR023408">
    <property type="entry name" value="MscS_beta-dom_sf"/>
</dbReference>
<dbReference type="InterPro" id="IPR006685">
    <property type="entry name" value="MscS_channel_2nd"/>
</dbReference>
<dbReference type="InterPro" id="IPR011066">
    <property type="entry name" value="MscS_channel_C_sf"/>
</dbReference>
<dbReference type="InterPro" id="IPR006686">
    <property type="entry name" value="MscS_channel_CS"/>
</dbReference>
<dbReference type="InterPro" id="IPR011014">
    <property type="entry name" value="MscS_channel_TM-2"/>
</dbReference>
<dbReference type="PANTHER" id="PTHR30566:SF5">
    <property type="entry name" value="MECHANOSENSITIVE ION CHANNEL PROTEIN 1, MITOCHONDRIAL-RELATED"/>
    <property type="match status" value="1"/>
</dbReference>
<dbReference type="PANTHER" id="PTHR30566">
    <property type="entry name" value="YNAI-RELATED MECHANOSENSITIVE ION CHANNEL"/>
    <property type="match status" value="1"/>
</dbReference>
<dbReference type="Pfam" id="PF21088">
    <property type="entry name" value="MS_channel_1st"/>
    <property type="match status" value="1"/>
</dbReference>
<dbReference type="Pfam" id="PF05552">
    <property type="entry name" value="MS_channel_1st_1"/>
    <property type="match status" value="1"/>
</dbReference>
<dbReference type="Pfam" id="PF00924">
    <property type="entry name" value="MS_channel_2nd"/>
    <property type="match status" value="1"/>
</dbReference>
<dbReference type="Pfam" id="PF21082">
    <property type="entry name" value="MS_channel_3rd"/>
    <property type="match status" value="1"/>
</dbReference>
<dbReference type="SUPFAM" id="SSF82689">
    <property type="entry name" value="Mechanosensitive channel protein MscS (YggB), C-terminal domain"/>
    <property type="match status" value="1"/>
</dbReference>
<dbReference type="SUPFAM" id="SSF82861">
    <property type="entry name" value="Mechanosensitive channel protein MscS (YggB), transmembrane region"/>
    <property type="match status" value="1"/>
</dbReference>
<dbReference type="SUPFAM" id="SSF50182">
    <property type="entry name" value="Sm-like ribonucleoproteins"/>
    <property type="match status" value="1"/>
</dbReference>
<dbReference type="PROSITE" id="PS01246">
    <property type="entry name" value="UPF0003"/>
    <property type="match status" value="1"/>
</dbReference>
<accession>Q57634</accession>
<evidence type="ECO:0000255" key="1"/>
<evidence type="ECO:0000269" key="2">
    <source>
    </source>
</evidence>
<evidence type="ECO:0000305" key="3"/>
<reference key="1">
    <citation type="journal article" date="1996" name="Science">
        <title>Complete genome sequence of the methanogenic archaeon, Methanococcus jannaschii.</title>
        <authorList>
            <person name="Bult C.J."/>
            <person name="White O."/>
            <person name="Olsen G.J."/>
            <person name="Zhou L."/>
            <person name="Fleischmann R.D."/>
            <person name="Sutton G.G."/>
            <person name="Blake J.A."/>
            <person name="FitzGerald L.M."/>
            <person name="Clayton R.A."/>
            <person name="Gocayne J.D."/>
            <person name="Kerlavage A.R."/>
            <person name="Dougherty B.A."/>
            <person name="Tomb J.-F."/>
            <person name="Adams M.D."/>
            <person name="Reich C.I."/>
            <person name="Overbeek R."/>
            <person name="Kirkness E.F."/>
            <person name="Weinstock K.G."/>
            <person name="Merrick J.M."/>
            <person name="Glodek A."/>
            <person name="Scott J.L."/>
            <person name="Geoghagen N.S.M."/>
            <person name="Weidman J.F."/>
            <person name="Fuhrmann J.L."/>
            <person name="Nguyen D."/>
            <person name="Utterback T.R."/>
            <person name="Kelley J.M."/>
            <person name="Peterson J.D."/>
            <person name="Sadow P.W."/>
            <person name="Hanna M.C."/>
            <person name="Cotton M.D."/>
            <person name="Roberts K.M."/>
            <person name="Hurst M.A."/>
            <person name="Kaine B.P."/>
            <person name="Borodovsky M."/>
            <person name="Klenk H.-P."/>
            <person name="Fraser C.M."/>
            <person name="Smith H.O."/>
            <person name="Woese C.R."/>
            <person name="Venter J.C."/>
        </authorList>
    </citation>
    <scope>NUCLEOTIDE SEQUENCE [LARGE SCALE GENOMIC DNA]</scope>
    <source>
        <strain>ATCC 43067 / DSM 2661 / JAL-1 / JCM 10045 / NBRC 100440</strain>
    </source>
</reference>
<reference key="2">
    <citation type="journal article" date="2001" name="Biophys. J.">
        <title>Molecular identification of a mechanosensitive channel in archaea.</title>
        <authorList>
            <person name="Kloda A."/>
            <person name="Martinac B."/>
        </authorList>
    </citation>
    <scope>FUNCTION AS A MECHANOSENSITIVE CHANNEL</scope>
    <scope>SUBCELLULAR LOCATION</scope>
</reference>
<comment type="function">
    <text evidence="2">Small-conductance mechanosensitive channel that opens in response to stretch forces in the membrane lipid bilayer. Exhibits a sixfold preference for cations over anions. Non-rectifying.</text>
</comment>
<comment type="subcellular location">
    <subcellularLocation>
        <location evidence="2">Cell membrane</location>
        <topology evidence="2">Multi-pass membrane protein</topology>
    </subcellularLocation>
</comment>
<comment type="similarity">
    <text evidence="3">Belongs to the MscS (TC 1.A.23) family.</text>
</comment>
<gene>
    <name type="ordered locus">MJ0170</name>
</gene>